<proteinExistence type="inferred from homology"/>
<name>MINE_ALKMQ</name>
<sequence length="94" mass="10960">MMDLFKFFSKDNGTSKKVAKERLKLVLVHDRTNCSPRFLEMLKEDIIKVISDYVEIDEVGLEIKLTTTKRDFDEQSVPALVANIPIKKMKERSR</sequence>
<accession>A6TQI5</accession>
<dbReference type="EMBL" id="CP000724">
    <property type="protein sequence ID" value="ABR48453.1"/>
    <property type="molecule type" value="Genomic_DNA"/>
</dbReference>
<dbReference type="RefSeq" id="WP_012063428.1">
    <property type="nucleotide sequence ID" value="NC_009633.1"/>
</dbReference>
<dbReference type="STRING" id="293826.Amet_2296"/>
<dbReference type="KEGG" id="amt:Amet_2296"/>
<dbReference type="eggNOG" id="COG0851">
    <property type="taxonomic scope" value="Bacteria"/>
</dbReference>
<dbReference type="HOGENOM" id="CLU_137929_1_1_9"/>
<dbReference type="OrthoDB" id="9796578at2"/>
<dbReference type="Proteomes" id="UP000001572">
    <property type="component" value="Chromosome"/>
</dbReference>
<dbReference type="GO" id="GO:0051301">
    <property type="term" value="P:cell division"/>
    <property type="evidence" value="ECO:0007669"/>
    <property type="project" value="UniProtKB-KW"/>
</dbReference>
<dbReference type="GO" id="GO:0032955">
    <property type="term" value="P:regulation of division septum assembly"/>
    <property type="evidence" value="ECO:0007669"/>
    <property type="project" value="InterPro"/>
</dbReference>
<dbReference type="Gene3D" id="3.30.1070.10">
    <property type="entry name" value="Cell division topological specificity factor MinE"/>
    <property type="match status" value="1"/>
</dbReference>
<dbReference type="HAMAP" id="MF_00262">
    <property type="entry name" value="MinE"/>
    <property type="match status" value="1"/>
</dbReference>
<dbReference type="InterPro" id="IPR005527">
    <property type="entry name" value="MinE"/>
</dbReference>
<dbReference type="InterPro" id="IPR036707">
    <property type="entry name" value="MinE_sf"/>
</dbReference>
<dbReference type="NCBIfam" id="TIGR01215">
    <property type="entry name" value="minE"/>
    <property type="match status" value="1"/>
</dbReference>
<dbReference type="NCBIfam" id="NF001422">
    <property type="entry name" value="PRK00296.1"/>
    <property type="match status" value="1"/>
</dbReference>
<dbReference type="Pfam" id="PF03776">
    <property type="entry name" value="MinE"/>
    <property type="match status" value="1"/>
</dbReference>
<dbReference type="SUPFAM" id="SSF55229">
    <property type="entry name" value="Cell division protein MinE topological specificity domain"/>
    <property type="match status" value="1"/>
</dbReference>
<organism>
    <name type="scientific">Alkaliphilus metalliredigens (strain QYMF)</name>
    <dbReference type="NCBI Taxonomy" id="293826"/>
    <lineage>
        <taxon>Bacteria</taxon>
        <taxon>Bacillati</taxon>
        <taxon>Bacillota</taxon>
        <taxon>Clostridia</taxon>
        <taxon>Peptostreptococcales</taxon>
        <taxon>Natronincolaceae</taxon>
        <taxon>Alkaliphilus</taxon>
    </lineage>
</organism>
<gene>
    <name evidence="1" type="primary">minE</name>
    <name type="ordered locus">Amet_2296</name>
</gene>
<keyword id="KW-0131">Cell cycle</keyword>
<keyword id="KW-0132">Cell division</keyword>
<keyword id="KW-1185">Reference proteome</keyword>
<evidence type="ECO:0000255" key="1">
    <source>
        <dbReference type="HAMAP-Rule" id="MF_00262"/>
    </source>
</evidence>
<feature type="chain" id="PRO_1000078629" description="Cell division topological specificity factor">
    <location>
        <begin position="1"/>
        <end position="94"/>
    </location>
</feature>
<reference key="1">
    <citation type="journal article" date="2016" name="Genome Announc.">
        <title>Complete genome sequence of Alkaliphilus metalliredigens strain QYMF, an alkaliphilic and metal-reducing bacterium isolated from borax-contaminated leachate ponds.</title>
        <authorList>
            <person name="Hwang C."/>
            <person name="Copeland A."/>
            <person name="Lucas S."/>
            <person name="Lapidus A."/>
            <person name="Barry K."/>
            <person name="Detter J.C."/>
            <person name="Glavina Del Rio T."/>
            <person name="Hammon N."/>
            <person name="Israni S."/>
            <person name="Dalin E."/>
            <person name="Tice H."/>
            <person name="Pitluck S."/>
            <person name="Chertkov O."/>
            <person name="Brettin T."/>
            <person name="Bruce D."/>
            <person name="Han C."/>
            <person name="Schmutz J."/>
            <person name="Larimer F."/>
            <person name="Land M.L."/>
            <person name="Hauser L."/>
            <person name="Kyrpides N."/>
            <person name="Mikhailova N."/>
            <person name="Ye Q."/>
            <person name="Zhou J."/>
            <person name="Richardson P."/>
            <person name="Fields M.W."/>
        </authorList>
    </citation>
    <scope>NUCLEOTIDE SEQUENCE [LARGE SCALE GENOMIC DNA]</scope>
    <source>
        <strain>QYMF</strain>
    </source>
</reference>
<protein>
    <recommendedName>
        <fullName evidence="1">Cell division topological specificity factor</fullName>
    </recommendedName>
</protein>
<comment type="function">
    <text evidence="1">Prevents the cell division inhibition by proteins MinC and MinD at internal division sites while permitting inhibition at polar sites. This ensures cell division at the proper site by restricting the formation of a division septum at the midpoint of the long axis of the cell.</text>
</comment>
<comment type="similarity">
    <text evidence="1">Belongs to the MinE family.</text>
</comment>